<evidence type="ECO:0000255" key="1">
    <source>
        <dbReference type="HAMAP-Rule" id="MF_01126"/>
    </source>
</evidence>
<dbReference type="EMBL" id="CP000416">
    <property type="protein sequence ID" value="ABJ64499.1"/>
    <property type="molecule type" value="Genomic_DNA"/>
</dbReference>
<dbReference type="RefSeq" id="WP_011668072.1">
    <property type="nucleotide sequence ID" value="NC_008497.1"/>
</dbReference>
<dbReference type="SMR" id="Q03QM3"/>
<dbReference type="STRING" id="387344.LVIS_1401"/>
<dbReference type="KEGG" id="lbr:LVIS_1401"/>
<dbReference type="eggNOG" id="COG4471">
    <property type="taxonomic scope" value="Bacteria"/>
</dbReference>
<dbReference type="HOGENOM" id="CLU_159890_0_3_9"/>
<dbReference type="Proteomes" id="UP000001652">
    <property type="component" value="Chromosome"/>
</dbReference>
<dbReference type="GO" id="GO:0005737">
    <property type="term" value="C:cytoplasm"/>
    <property type="evidence" value="ECO:0007669"/>
    <property type="project" value="UniProtKB-SubCell"/>
</dbReference>
<dbReference type="HAMAP" id="MF_01126">
    <property type="entry name" value="UPF0298"/>
    <property type="match status" value="1"/>
</dbReference>
<dbReference type="InterPro" id="IPR016979">
    <property type="entry name" value="DUF2129"/>
</dbReference>
<dbReference type="Pfam" id="PF09902">
    <property type="entry name" value="DUF2129"/>
    <property type="match status" value="1"/>
</dbReference>
<dbReference type="PIRSF" id="PIRSF031653">
    <property type="entry name" value="UCP031653"/>
    <property type="match status" value="1"/>
</dbReference>
<protein>
    <recommendedName>
        <fullName evidence="1">UPF0298 protein LVIS_1401</fullName>
    </recommendedName>
</protein>
<sequence>MAFTIQPRQSLIVYTYSLKQTRQLKRYGTVMYVSKKMRYVVLYVNREDVTKLTDQLTHLRFVKRVVASSRPTINETFNGVAAEMVTTTETEDDDE</sequence>
<accession>Q03QM3</accession>
<organism>
    <name type="scientific">Levilactobacillus brevis (strain ATCC 367 / BCRC 12310 / CIP 105137 / JCM 1170 / LMG 11437 / NCIMB 947 / NCTC 947)</name>
    <name type="common">Lactobacillus brevis</name>
    <dbReference type="NCBI Taxonomy" id="387344"/>
    <lineage>
        <taxon>Bacteria</taxon>
        <taxon>Bacillati</taxon>
        <taxon>Bacillota</taxon>
        <taxon>Bacilli</taxon>
        <taxon>Lactobacillales</taxon>
        <taxon>Lactobacillaceae</taxon>
        <taxon>Levilactobacillus</taxon>
    </lineage>
</organism>
<reference key="1">
    <citation type="journal article" date="2006" name="Proc. Natl. Acad. Sci. U.S.A.">
        <title>Comparative genomics of the lactic acid bacteria.</title>
        <authorList>
            <person name="Makarova K.S."/>
            <person name="Slesarev A."/>
            <person name="Wolf Y.I."/>
            <person name="Sorokin A."/>
            <person name="Mirkin B."/>
            <person name="Koonin E.V."/>
            <person name="Pavlov A."/>
            <person name="Pavlova N."/>
            <person name="Karamychev V."/>
            <person name="Polouchine N."/>
            <person name="Shakhova V."/>
            <person name="Grigoriev I."/>
            <person name="Lou Y."/>
            <person name="Rohksar D."/>
            <person name="Lucas S."/>
            <person name="Huang K."/>
            <person name="Goodstein D.M."/>
            <person name="Hawkins T."/>
            <person name="Plengvidhya V."/>
            <person name="Welker D."/>
            <person name="Hughes J."/>
            <person name="Goh Y."/>
            <person name="Benson A."/>
            <person name="Baldwin K."/>
            <person name="Lee J.-H."/>
            <person name="Diaz-Muniz I."/>
            <person name="Dosti B."/>
            <person name="Smeianov V."/>
            <person name="Wechter W."/>
            <person name="Barabote R."/>
            <person name="Lorca G."/>
            <person name="Altermann E."/>
            <person name="Barrangou R."/>
            <person name="Ganesan B."/>
            <person name="Xie Y."/>
            <person name="Rawsthorne H."/>
            <person name="Tamir D."/>
            <person name="Parker C."/>
            <person name="Breidt F."/>
            <person name="Broadbent J.R."/>
            <person name="Hutkins R."/>
            <person name="O'Sullivan D."/>
            <person name="Steele J."/>
            <person name="Unlu G."/>
            <person name="Saier M.H. Jr."/>
            <person name="Klaenhammer T."/>
            <person name="Richardson P."/>
            <person name="Kozyavkin S."/>
            <person name="Weimer B.C."/>
            <person name="Mills D.A."/>
        </authorList>
    </citation>
    <scope>NUCLEOTIDE SEQUENCE [LARGE SCALE GENOMIC DNA]</scope>
    <source>
        <strain>ATCC 367 / BCRC 12310 / CIP 105137 / JCM 1170 / LMG 11437 / NCIMB 947 / NCTC 947</strain>
    </source>
</reference>
<gene>
    <name type="ordered locus">LVIS_1401</name>
</gene>
<proteinExistence type="inferred from homology"/>
<name>Y1401_LEVBA</name>
<feature type="chain" id="PRO_1000065359" description="UPF0298 protein LVIS_1401">
    <location>
        <begin position="1"/>
        <end position="95"/>
    </location>
</feature>
<keyword id="KW-0963">Cytoplasm</keyword>
<keyword id="KW-1185">Reference proteome</keyword>
<comment type="subcellular location">
    <subcellularLocation>
        <location evidence="1">Cytoplasm</location>
    </subcellularLocation>
</comment>
<comment type="similarity">
    <text evidence="1">Belongs to the UPF0298 family.</text>
</comment>